<gene>
    <name evidence="1" type="primary">rnpA</name>
    <name type="ordered locus">XF_2781</name>
</gene>
<dbReference type="EC" id="3.1.26.5" evidence="1"/>
<dbReference type="EMBL" id="AE003849">
    <property type="protein sequence ID" value="AAF85566.1"/>
    <property type="status" value="ALT_INIT"/>
    <property type="molecule type" value="Genomic_DNA"/>
</dbReference>
<dbReference type="PIR" id="A82517">
    <property type="entry name" value="A82517"/>
</dbReference>
<dbReference type="SMR" id="Q9P9U0"/>
<dbReference type="STRING" id="160492.XF_2781"/>
<dbReference type="KEGG" id="xfa:XF_2781"/>
<dbReference type="eggNOG" id="COG0594">
    <property type="taxonomic scope" value="Bacteria"/>
</dbReference>
<dbReference type="HOGENOM" id="CLU_117179_3_0_6"/>
<dbReference type="Proteomes" id="UP000000812">
    <property type="component" value="Chromosome"/>
</dbReference>
<dbReference type="GO" id="GO:0030677">
    <property type="term" value="C:ribonuclease P complex"/>
    <property type="evidence" value="ECO:0007669"/>
    <property type="project" value="TreeGrafter"/>
</dbReference>
<dbReference type="GO" id="GO:0042781">
    <property type="term" value="F:3'-tRNA processing endoribonuclease activity"/>
    <property type="evidence" value="ECO:0007669"/>
    <property type="project" value="TreeGrafter"/>
</dbReference>
<dbReference type="GO" id="GO:0004526">
    <property type="term" value="F:ribonuclease P activity"/>
    <property type="evidence" value="ECO:0007669"/>
    <property type="project" value="UniProtKB-UniRule"/>
</dbReference>
<dbReference type="GO" id="GO:0000049">
    <property type="term" value="F:tRNA binding"/>
    <property type="evidence" value="ECO:0007669"/>
    <property type="project" value="UniProtKB-UniRule"/>
</dbReference>
<dbReference type="GO" id="GO:0001682">
    <property type="term" value="P:tRNA 5'-leader removal"/>
    <property type="evidence" value="ECO:0007669"/>
    <property type="project" value="UniProtKB-UniRule"/>
</dbReference>
<dbReference type="Gene3D" id="3.30.230.10">
    <property type="match status" value="1"/>
</dbReference>
<dbReference type="HAMAP" id="MF_00227">
    <property type="entry name" value="RNase_P"/>
    <property type="match status" value="1"/>
</dbReference>
<dbReference type="InterPro" id="IPR020568">
    <property type="entry name" value="Ribosomal_Su5_D2-typ_SF"/>
</dbReference>
<dbReference type="InterPro" id="IPR014721">
    <property type="entry name" value="Ribsml_uS5_D2-typ_fold_subgr"/>
</dbReference>
<dbReference type="InterPro" id="IPR000100">
    <property type="entry name" value="RNase_P"/>
</dbReference>
<dbReference type="InterPro" id="IPR020539">
    <property type="entry name" value="RNase_P_CS"/>
</dbReference>
<dbReference type="NCBIfam" id="TIGR00188">
    <property type="entry name" value="rnpA"/>
    <property type="match status" value="1"/>
</dbReference>
<dbReference type="PANTHER" id="PTHR33992">
    <property type="entry name" value="RIBONUCLEASE P PROTEIN COMPONENT"/>
    <property type="match status" value="1"/>
</dbReference>
<dbReference type="PANTHER" id="PTHR33992:SF1">
    <property type="entry name" value="RIBONUCLEASE P PROTEIN COMPONENT"/>
    <property type="match status" value="1"/>
</dbReference>
<dbReference type="Pfam" id="PF00825">
    <property type="entry name" value="Ribonuclease_P"/>
    <property type="match status" value="1"/>
</dbReference>
<dbReference type="SUPFAM" id="SSF54211">
    <property type="entry name" value="Ribosomal protein S5 domain 2-like"/>
    <property type="match status" value="1"/>
</dbReference>
<dbReference type="PROSITE" id="PS00648">
    <property type="entry name" value="RIBONUCLEASE_P"/>
    <property type="match status" value="1"/>
</dbReference>
<keyword id="KW-0255">Endonuclease</keyword>
<keyword id="KW-0378">Hydrolase</keyword>
<keyword id="KW-0540">Nuclease</keyword>
<keyword id="KW-0694">RNA-binding</keyword>
<keyword id="KW-0819">tRNA processing</keyword>
<feature type="chain" id="PRO_0000198569" description="Ribonuclease P protein component">
    <location>
        <begin position="1"/>
        <end position="135"/>
    </location>
</feature>
<accession>Q9P9U0</accession>
<sequence length="135" mass="15492">MNSCKRFPRSARICLRSEYYVAFEQGRRYSSVLLRLHHLPTSGPVRLGLVVSRRVDIRAVNRNRIKRALREVMRQIAYKLVPGDYVVVVRQTAKDVSNAELSVALLSLLRRIGALPLAPIDNAMLPFFERNCSRK</sequence>
<comment type="function">
    <text evidence="1">RNaseP catalyzes the removal of the 5'-leader sequence from pre-tRNA to produce the mature 5'-terminus. It can also cleave other RNA substrates such as 4.5S RNA. The protein component plays an auxiliary but essential role in vivo by binding to the 5'-leader sequence and broadening the substrate specificity of the ribozyme.</text>
</comment>
<comment type="catalytic activity">
    <reaction evidence="1">
        <text>Endonucleolytic cleavage of RNA, removing 5'-extranucleotides from tRNA precursor.</text>
        <dbReference type="EC" id="3.1.26.5"/>
    </reaction>
</comment>
<comment type="subunit">
    <text evidence="1">Consists of a catalytic RNA component (M1 or rnpB) and a protein subunit.</text>
</comment>
<comment type="similarity">
    <text evidence="1">Belongs to the RnpA family.</text>
</comment>
<comment type="sequence caution" evidence="2">
    <conflict type="erroneous initiation">
        <sequence resource="EMBL-CDS" id="AAF85566"/>
    </conflict>
</comment>
<proteinExistence type="inferred from homology"/>
<evidence type="ECO:0000255" key="1">
    <source>
        <dbReference type="HAMAP-Rule" id="MF_00227"/>
    </source>
</evidence>
<evidence type="ECO:0000305" key="2"/>
<organism>
    <name type="scientific">Xylella fastidiosa (strain 9a5c)</name>
    <dbReference type="NCBI Taxonomy" id="160492"/>
    <lineage>
        <taxon>Bacteria</taxon>
        <taxon>Pseudomonadati</taxon>
        <taxon>Pseudomonadota</taxon>
        <taxon>Gammaproteobacteria</taxon>
        <taxon>Lysobacterales</taxon>
        <taxon>Lysobacteraceae</taxon>
        <taxon>Xylella</taxon>
    </lineage>
</organism>
<protein>
    <recommendedName>
        <fullName evidence="1">Ribonuclease P protein component</fullName>
        <shortName evidence="1">RNase P protein</shortName>
        <shortName evidence="1">RNaseP protein</shortName>
        <ecNumber evidence="1">3.1.26.5</ecNumber>
    </recommendedName>
    <alternativeName>
        <fullName evidence="1">Protein C5</fullName>
    </alternativeName>
</protein>
<reference key="1">
    <citation type="journal article" date="2000" name="Nature">
        <title>The genome sequence of the plant pathogen Xylella fastidiosa.</title>
        <authorList>
            <person name="Simpson A.J.G."/>
            <person name="Reinach F.C."/>
            <person name="Arruda P."/>
            <person name="Abreu F.A."/>
            <person name="Acencio M."/>
            <person name="Alvarenga R."/>
            <person name="Alves L.M.C."/>
            <person name="Araya J.E."/>
            <person name="Baia G.S."/>
            <person name="Baptista C.S."/>
            <person name="Barros M.H."/>
            <person name="Bonaccorsi E.D."/>
            <person name="Bordin S."/>
            <person name="Bove J.M."/>
            <person name="Briones M.R.S."/>
            <person name="Bueno M.R.P."/>
            <person name="Camargo A.A."/>
            <person name="Camargo L.E.A."/>
            <person name="Carraro D.M."/>
            <person name="Carrer H."/>
            <person name="Colauto N.B."/>
            <person name="Colombo C."/>
            <person name="Costa F.F."/>
            <person name="Costa M.C.R."/>
            <person name="Costa-Neto C.M."/>
            <person name="Coutinho L.L."/>
            <person name="Cristofani M."/>
            <person name="Dias-Neto E."/>
            <person name="Docena C."/>
            <person name="El-Dorry H."/>
            <person name="Facincani A.P."/>
            <person name="Ferreira A.J.S."/>
            <person name="Ferreira V.C.A."/>
            <person name="Ferro J.A."/>
            <person name="Fraga J.S."/>
            <person name="Franca S.C."/>
            <person name="Franco M.C."/>
            <person name="Frohme M."/>
            <person name="Furlan L.R."/>
            <person name="Garnier M."/>
            <person name="Goldman G.H."/>
            <person name="Goldman M.H.S."/>
            <person name="Gomes S.L."/>
            <person name="Gruber A."/>
            <person name="Ho P.L."/>
            <person name="Hoheisel J.D."/>
            <person name="Junqueira M.L."/>
            <person name="Kemper E.L."/>
            <person name="Kitajima J.P."/>
            <person name="Krieger J.E."/>
            <person name="Kuramae E.E."/>
            <person name="Laigret F."/>
            <person name="Lambais M.R."/>
            <person name="Leite L.C.C."/>
            <person name="Lemos E.G.M."/>
            <person name="Lemos M.V.F."/>
            <person name="Lopes S.A."/>
            <person name="Lopes C.R."/>
            <person name="Machado J.A."/>
            <person name="Machado M.A."/>
            <person name="Madeira A.M.B.N."/>
            <person name="Madeira H.M.F."/>
            <person name="Marino C.L."/>
            <person name="Marques M.V."/>
            <person name="Martins E.A.L."/>
            <person name="Martins E.M.F."/>
            <person name="Matsukuma A.Y."/>
            <person name="Menck C.F.M."/>
            <person name="Miracca E.C."/>
            <person name="Miyaki C.Y."/>
            <person name="Monteiro-Vitorello C.B."/>
            <person name="Moon D.H."/>
            <person name="Nagai M.A."/>
            <person name="Nascimento A.L.T.O."/>
            <person name="Netto L.E.S."/>
            <person name="Nhani A. Jr."/>
            <person name="Nobrega F.G."/>
            <person name="Nunes L.R."/>
            <person name="Oliveira M.A."/>
            <person name="de Oliveira M.C."/>
            <person name="de Oliveira R.C."/>
            <person name="Palmieri D.A."/>
            <person name="Paris A."/>
            <person name="Peixoto B.R."/>
            <person name="Pereira G.A.G."/>
            <person name="Pereira H.A. Jr."/>
            <person name="Pesquero J.B."/>
            <person name="Quaggio R.B."/>
            <person name="Roberto P.G."/>
            <person name="Rodrigues V."/>
            <person name="de Rosa A.J.M."/>
            <person name="de Rosa V.E. Jr."/>
            <person name="de Sa R.G."/>
            <person name="Santelli R.V."/>
            <person name="Sawasaki H.E."/>
            <person name="da Silva A.C.R."/>
            <person name="da Silva A.M."/>
            <person name="da Silva F.R."/>
            <person name="Silva W.A. Jr."/>
            <person name="da Silveira J.F."/>
            <person name="Silvestri M.L.Z."/>
            <person name="Siqueira W.J."/>
            <person name="de Souza A.A."/>
            <person name="de Souza A.P."/>
            <person name="Terenzi M.F."/>
            <person name="Truffi D."/>
            <person name="Tsai S.M."/>
            <person name="Tsuhako M.H."/>
            <person name="Vallada H."/>
            <person name="Van Sluys M.A."/>
            <person name="Verjovski-Almeida S."/>
            <person name="Vettore A.L."/>
            <person name="Zago M.A."/>
            <person name="Zatz M."/>
            <person name="Meidanis J."/>
            <person name="Setubal J.C."/>
        </authorList>
    </citation>
    <scope>NUCLEOTIDE SEQUENCE [LARGE SCALE GENOMIC DNA]</scope>
    <source>
        <strain>9a5c</strain>
    </source>
</reference>
<name>RNPA_XYLFA</name>